<accession>A1B2N1</accession>
<sequence>MTLKIGVIGTGAIGQDHTRRINQVLAGARVAALNDVNRANAEACQRDHAPEARIFDDPHALIRDAEVDAILVCSWGQTHEEYVLAAIAAGKPCFCEKPLATTAEGARRIVEAEEAAGKRLVQVGFMRRYDPGYVALKKAVAEVTGAPLMVHAAHRNPRVGENYLTPMAIHDTLIHEIDVLRWLLDDDYVGARVLFPRKSPRAHEKLRDPQVVVLETARGVVIDVEVFVNCHYGYDIQCEIVGEDGIARLPEPMGIQTRSGAVLGQPILMDWKDRFIDSYDYELADFLKAAARGTAAGPTAWDGYVAAVTADACVAAQEAGGESVAIELPARPALYA</sequence>
<comment type="function">
    <text evidence="1">Involved in the oxidation of myo-inositol (MI) to 2-keto-myo-inositol (2KMI or 2-inosose).</text>
</comment>
<comment type="catalytic activity">
    <reaction evidence="1">
        <text>myo-inositol + NAD(+) = scyllo-inosose + NADH + H(+)</text>
        <dbReference type="Rhea" id="RHEA:16949"/>
        <dbReference type="ChEBI" id="CHEBI:15378"/>
        <dbReference type="ChEBI" id="CHEBI:17268"/>
        <dbReference type="ChEBI" id="CHEBI:17811"/>
        <dbReference type="ChEBI" id="CHEBI:57540"/>
        <dbReference type="ChEBI" id="CHEBI:57945"/>
        <dbReference type="EC" id="1.1.1.18"/>
    </reaction>
</comment>
<comment type="subunit">
    <text evidence="1">Homotetramer.</text>
</comment>
<comment type="similarity">
    <text evidence="1">Belongs to the Gfo/Idh/MocA family.</text>
</comment>
<name>IOLG_PARDP</name>
<proteinExistence type="inferred from homology"/>
<dbReference type="EC" id="1.1.1.18" evidence="1"/>
<dbReference type="EMBL" id="CP000489">
    <property type="protein sequence ID" value="ABL69775.1"/>
    <property type="molecule type" value="Genomic_DNA"/>
</dbReference>
<dbReference type="RefSeq" id="WP_011747973.1">
    <property type="nucleotide sequence ID" value="NC_008686.1"/>
</dbReference>
<dbReference type="SMR" id="A1B2N1"/>
<dbReference type="STRING" id="318586.Pden_1678"/>
<dbReference type="EnsemblBacteria" id="ABL69775">
    <property type="protein sequence ID" value="ABL69775"/>
    <property type="gene ID" value="Pden_1678"/>
</dbReference>
<dbReference type="GeneID" id="93450070"/>
<dbReference type="KEGG" id="pde:Pden_1678"/>
<dbReference type="eggNOG" id="COG0673">
    <property type="taxonomic scope" value="Bacteria"/>
</dbReference>
<dbReference type="HOGENOM" id="CLU_023194_0_1_5"/>
<dbReference type="OrthoDB" id="9792935at2"/>
<dbReference type="Proteomes" id="UP000000361">
    <property type="component" value="Chromosome 1"/>
</dbReference>
<dbReference type="GO" id="GO:0050112">
    <property type="term" value="F:inositol 2-dehydrogenase (NAD+) activity"/>
    <property type="evidence" value="ECO:0007669"/>
    <property type="project" value="UniProtKB-UniRule"/>
</dbReference>
<dbReference type="GO" id="GO:0000166">
    <property type="term" value="F:nucleotide binding"/>
    <property type="evidence" value="ECO:0007669"/>
    <property type="project" value="InterPro"/>
</dbReference>
<dbReference type="GO" id="GO:0019310">
    <property type="term" value="P:inositol catabolic process"/>
    <property type="evidence" value="ECO:0007669"/>
    <property type="project" value="UniProtKB-UniRule"/>
</dbReference>
<dbReference type="Gene3D" id="3.30.360.10">
    <property type="entry name" value="Dihydrodipicolinate Reductase, domain 2"/>
    <property type="match status" value="1"/>
</dbReference>
<dbReference type="Gene3D" id="3.40.50.720">
    <property type="entry name" value="NAD(P)-binding Rossmann-like Domain"/>
    <property type="match status" value="1"/>
</dbReference>
<dbReference type="HAMAP" id="MF_01671">
    <property type="entry name" value="IolG"/>
    <property type="match status" value="1"/>
</dbReference>
<dbReference type="InterPro" id="IPR050424">
    <property type="entry name" value="Gfo-Idh-MocA_inositol_DH"/>
</dbReference>
<dbReference type="InterPro" id="IPR004104">
    <property type="entry name" value="Gfo/Idh/MocA-like_OxRdtase_C"/>
</dbReference>
<dbReference type="InterPro" id="IPR000683">
    <property type="entry name" value="Gfo/Idh/MocA-like_OxRdtase_N"/>
</dbReference>
<dbReference type="InterPro" id="IPR023794">
    <property type="entry name" value="MI/DCI_dehydrogenase"/>
</dbReference>
<dbReference type="InterPro" id="IPR036291">
    <property type="entry name" value="NAD(P)-bd_dom_sf"/>
</dbReference>
<dbReference type="PANTHER" id="PTHR43593">
    <property type="match status" value="1"/>
</dbReference>
<dbReference type="PANTHER" id="PTHR43593:SF1">
    <property type="entry name" value="INOSITOL 2-DEHYDROGENASE"/>
    <property type="match status" value="1"/>
</dbReference>
<dbReference type="Pfam" id="PF01408">
    <property type="entry name" value="GFO_IDH_MocA"/>
    <property type="match status" value="1"/>
</dbReference>
<dbReference type="Pfam" id="PF02894">
    <property type="entry name" value="GFO_IDH_MocA_C"/>
    <property type="match status" value="1"/>
</dbReference>
<dbReference type="SUPFAM" id="SSF55347">
    <property type="entry name" value="Glyceraldehyde-3-phosphate dehydrogenase-like, C-terminal domain"/>
    <property type="match status" value="1"/>
</dbReference>
<dbReference type="SUPFAM" id="SSF51735">
    <property type="entry name" value="NAD(P)-binding Rossmann-fold domains"/>
    <property type="match status" value="1"/>
</dbReference>
<feature type="chain" id="PRO_0000352579" description="Inositol 2-dehydrogenase">
    <location>
        <begin position="1"/>
        <end position="336"/>
    </location>
</feature>
<organism>
    <name type="scientific">Paracoccus denitrificans (strain Pd 1222)</name>
    <dbReference type="NCBI Taxonomy" id="318586"/>
    <lineage>
        <taxon>Bacteria</taxon>
        <taxon>Pseudomonadati</taxon>
        <taxon>Pseudomonadota</taxon>
        <taxon>Alphaproteobacteria</taxon>
        <taxon>Rhodobacterales</taxon>
        <taxon>Paracoccaceae</taxon>
        <taxon>Paracoccus</taxon>
    </lineage>
</organism>
<gene>
    <name evidence="1" type="primary">iolG</name>
    <name type="ordered locus">Pden_1678</name>
</gene>
<protein>
    <recommendedName>
        <fullName evidence="1">Inositol 2-dehydrogenase</fullName>
        <ecNumber evidence="1">1.1.1.18</ecNumber>
    </recommendedName>
    <alternativeName>
        <fullName evidence="1">Myo-inositol 2-dehydrogenase</fullName>
        <shortName evidence="1">MI 2-dehydrogenase</shortName>
    </alternativeName>
</protein>
<reference key="1">
    <citation type="submission" date="2006-12" db="EMBL/GenBank/DDBJ databases">
        <title>Complete sequence of chromosome 1 of Paracoccus denitrificans PD1222.</title>
        <authorList>
            <person name="Copeland A."/>
            <person name="Lucas S."/>
            <person name="Lapidus A."/>
            <person name="Barry K."/>
            <person name="Detter J.C."/>
            <person name="Glavina del Rio T."/>
            <person name="Hammon N."/>
            <person name="Israni S."/>
            <person name="Dalin E."/>
            <person name="Tice H."/>
            <person name="Pitluck S."/>
            <person name="Munk A.C."/>
            <person name="Brettin T."/>
            <person name="Bruce D."/>
            <person name="Han C."/>
            <person name="Tapia R."/>
            <person name="Gilna P."/>
            <person name="Schmutz J."/>
            <person name="Larimer F."/>
            <person name="Land M."/>
            <person name="Hauser L."/>
            <person name="Kyrpides N."/>
            <person name="Lykidis A."/>
            <person name="Spiro S."/>
            <person name="Richardson D.J."/>
            <person name="Moir J.W.B."/>
            <person name="Ferguson S.J."/>
            <person name="van Spanning R.J.M."/>
            <person name="Richardson P."/>
        </authorList>
    </citation>
    <scope>NUCLEOTIDE SEQUENCE [LARGE SCALE GENOMIC DNA]</scope>
    <source>
        <strain>Pd 1222</strain>
    </source>
</reference>
<evidence type="ECO:0000255" key="1">
    <source>
        <dbReference type="HAMAP-Rule" id="MF_01671"/>
    </source>
</evidence>
<keyword id="KW-0520">NAD</keyword>
<keyword id="KW-0560">Oxidoreductase</keyword>
<keyword id="KW-1185">Reference proteome</keyword>